<evidence type="ECO:0000305" key="1"/>
<dbReference type="EMBL" id="Y10849">
    <property type="protein sequence ID" value="CAA71802.1"/>
    <property type="molecule type" value="mRNA"/>
</dbReference>
<dbReference type="EMBL" id="Y10852">
    <property type="protein sequence ID" value="CAA71805.1"/>
    <property type="molecule type" value="mRNA"/>
</dbReference>
<dbReference type="EnsemblPlants" id="mRNA.BjuB02g47560S">
    <property type="protein sequence ID" value="cds.BjuB02g47560S"/>
    <property type="gene ID" value="BjuB02g47560S"/>
</dbReference>
<dbReference type="Gramene" id="mRNA.BjuB02g47560S">
    <property type="protein sequence ID" value="cds.BjuB02g47560S"/>
    <property type="gene ID" value="BjuB02g47560S"/>
</dbReference>
<dbReference type="GO" id="GO:0046872">
    <property type="term" value="F:metal ion binding"/>
    <property type="evidence" value="ECO:0007669"/>
    <property type="project" value="UniProtKB-KW"/>
</dbReference>
<dbReference type="InterPro" id="IPR000347">
    <property type="entry name" value="Metalthion_15p"/>
</dbReference>
<dbReference type="PANTHER" id="PTHR33543">
    <property type="entry name" value="METALLOTHIONEIN-LIKE PROTEIN 2A"/>
    <property type="match status" value="1"/>
</dbReference>
<dbReference type="PANTHER" id="PTHR33543:SF33">
    <property type="entry name" value="METALLOTHIONEIN-LIKE PROTEIN 2B"/>
    <property type="match status" value="1"/>
</dbReference>
<dbReference type="Pfam" id="PF01439">
    <property type="entry name" value="Metallothio_2"/>
    <property type="match status" value="1"/>
</dbReference>
<reference key="1">
    <citation type="journal article" date="1998" name="Plant Mol. Biol.">
        <title>cDNA cloning and expression analysis of genes encoding GSH synthesis in roots of the heavy-metal accumulator Brassica juncea L.: evidence for Cd-induction of a putative mitochondrial gamma-glutamylcysteine synthetase isoform.</title>
        <authorList>
            <person name="Schaefer H.J."/>
            <person name="Haag-Kerwer A."/>
            <person name="Rausch T.H."/>
        </authorList>
    </citation>
    <scope>NUCLEOTIDE SEQUENCE [MRNA]</scope>
    <source>
        <strain>cv. Vittasso</strain>
        <tissue>Root</tissue>
    </source>
</reference>
<comment type="function">
    <text>Metallothioneins have a high content of cysteine residues that bind various heavy metals.</text>
</comment>
<comment type="similarity">
    <text evidence="1">Belongs to the metallothionein superfamily. Type 15 family.</text>
</comment>
<protein>
    <recommendedName>
        <fullName>Metallothionein-like protein type 2, MT2-4/MT2-25</fullName>
    </recommendedName>
</protein>
<sequence length="80" mass="8061">MSCCGGNCGCGSGCKCVGCGGCKMYPDLSFSGETTTTETLVLGVAPAMNSQFEASGETFVAENDACKCGSDCKCNPCTCK</sequence>
<name>MT21_BRAJU</name>
<keyword id="KW-0479">Metal-binding</keyword>
<keyword id="KW-0480">Metal-thiolate cluster</keyword>
<feature type="chain" id="PRO_0000197388" description="Metallothionein-like protein type 2, MT2-4/MT2-25">
    <location>
        <begin position="1"/>
        <end position="80"/>
    </location>
</feature>
<proteinExistence type="inferred from homology"/>
<organism>
    <name type="scientific">Brassica juncea</name>
    <name type="common">Indian mustard</name>
    <name type="synonym">Sinapis juncea</name>
    <dbReference type="NCBI Taxonomy" id="3707"/>
    <lineage>
        <taxon>Eukaryota</taxon>
        <taxon>Viridiplantae</taxon>
        <taxon>Streptophyta</taxon>
        <taxon>Embryophyta</taxon>
        <taxon>Tracheophyta</taxon>
        <taxon>Spermatophyta</taxon>
        <taxon>Magnoliopsida</taxon>
        <taxon>eudicotyledons</taxon>
        <taxon>Gunneridae</taxon>
        <taxon>Pentapetalae</taxon>
        <taxon>rosids</taxon>
        <taxon>malvids</taxon>
        <taxon>Brassicales</taxon>
        <taxon>Brassicaceae</taxon>
        <taxon>Brassiceae</taxon>
        <taxon>Brassica</taxon>
    </lineage>
</organism>
<accession>P56168</accession>
<accession>P56171</accession>